<comment type="function">
    <text evidence="1">Binds together with bS18 to 16S ribosomal RNA.</text>
</comment>
<comment type="similarity">
    <text evidence="1">Belongs to the bacterial ribosomal protein bS6 family.</text>
</comment>
<gene>
    <name evidence="1" type="primary">rpsF</name>
    <name evidence="1" type="synonym">rps6</name>
    <name type="ordered locus">PCC8801_0713</name>
</gene>
<dbReference type="EMBL" id="CP001287">
    <property type="protein sequence ID" value="ACK64797.1"/>
    <property type="molecule type" value="Genomic_DNA"/>
</dbReference>
<dbReference type="RefSeq" id="WP_012594073.1">
    <property type="nucleotide sequence ID" value="NC_011726.1"/>
</dbReference>
<dbReference type="SMR" id="B7JXP0"/>
<dbReference type="STRING" id="41431.PCC8801_0713"/>
<dbReference type="KEGG" id="cyp:PCC8801_0713"/>
<dbReference type="eggNOG" id="COG0360">
    <property type="taxonomic scope" value="Bacteria"/>
</dbReference>
<dbReference type="HOGENOM" id="CLU_113441_4_2_3"/>
<dbReference type="OrthoDB" id="9812702at2"/>
<dbReference type="Proteomes" id="UP000008204">
    <property type="component" value="Chromosome"/>
</dbReference>
<dbReference type="GO" id="GO:0005737">
    <property type="term" value="C:cytoplasm"/>
    <property type="evidence" value="ECO:0007669"/>
    <property type="project" value="UniProtKB-ARBA"/>
</dbReference>
<dbReference type="GO" id="GO:1990904">
    <property type="term" value="C:ribonucleoprotein complex"/>
    <property type="evidence" value="ECO:0007669"/>
    <property type="project" value="UniProtKB-KW"/>
</dbReference>
<dbReference type="GO" id="GO:0005840">
    <property type="term" value="C:ribosome"/>
    <property type="evidence" value="ECO:0007669"/>
    <property type="project" value="UniProtKB-KW"/>
</dbReference>
<dbReference type="GO" id="GO:0070181">
    <property type="term" value="F:small ribosomal subunit rRNA binding"/>
    <property type="evidence" value="ECO:0007669"/>
    <property type="project" value="TreeGrafter"/>
</dbReference>
<dbReference type="GO" id="GO:0003735">
    <property type="term" value="F:structural constituent of ribosome"/>
    <property type="evidence" value="ECO:0007669"/>
    <property type="project" value="InterPro"/>
</dbReference>
<dbReference type="GO" id="GO:0006412">
    <property type="term" value="P:translation"/>
    <property type="evidence" value="ECO:0007669"/>
    <property type="project" value="UniProtKB-UniRule"/>
</dbReference>
<dbReference type="CDD" id="cd15487">
    <property type="entry name" value="bS6_chloro_cyano"/>
    <property type="match status" value="1"/>
</dbReference>
<dbReference type="Gene3D" id="3.30.70.60">
    <property type="match status" value="1"/>
</dbReference>
<dbReference type="HAMAP" id="MF_00360">
    <property type="entry name" value="Ribosomal_bS6"/>
    <property type="match status" value="1"/>
</dbReference>
<dbReference type="InterPro" id="IPR000529">
    <property type="entry name" value="Ribosomal_bS6"/>
</dbReference>
<dbReference type="InterPro" id="IPR020815">
    <property type="entry name" value="Ribosomal_bS6_CS"/>
</dbReference>
<dbReference type="InterPro" id="IPR035980">
    <property type="entry name" value="Ribosomal_bS6_sf"/>
</dbReference>
<dbReference type="InterPro" id="IPR020814">
    <property type="entry name" value="Ribosomal_S6_plastid/chlpt"/>
</dbReference>
<dbReference type="InterPro" id="IPR014717">
    <property type="entry name" value="Transl_elong_EF1B/ribsomal_bS6"/>
</dbReference>
<dbReference type="NCBIfam" id="TIGR00166">
    <property type="entry name" value="S6"/>
    <property type="match status" value="1"/>
</dbReference>
<dbReference type="PANTHER" id="PTHR21011">
    <property type="entry name" value="MITOCHONDRIAL 28S RIBOSOMAL PROTEIN S6"/>
    <property type="match status" value="1"/>
</dbReference>
<dbReference type="PANTHER" id="PTHR21011:SF1">
    <property type="entry name" value="SMALL RIBOSOMAL SUBUNIT PROTEIN BS6M"/>
    <property type="match status" value="1"/>
</dbReference>
<dbReference type="Pfam" id="PF01250">
    <property type="entry name" value="Ribosomal_S6"/>
    <property type="match status" value="1"/>
</dbReference>
<dbReference type="SUPFAM" id="SSF54995">
    <property type="entry name" value="Ribosomal protein S6"/>
    <property type="match status" value="1"/>
</dbReference>
<dbReference type="PROSITE" id="PS01048">
    <property type="entry name" value="RIBOSOMAL_S6"/>
    <property type="match status" value="1"/>
</dbReference>
<evidence type="ECO:0000255" key="1">
    <source>
        <dbReference type="HAMAP-Rule" id="MF_00360"/>
    </source>
</evidence>
<evidence type="ECO:0000305" key="2"/>
<proteinExistence type="inferred from homology"/>
<keyword id="KW-1185">Reference proteome</keyword>
<keyword id="KW-0687">Ribonucleoprotein</keyword>
<keyword id="KW-0689">Ribosomal protein</keyword>
<keyword id="KW-0694">RNA-binding</keyword>
<keyword id="KW-0699">rRNA-binding</keyword>
<protein>
    <recommendedName>
        <fullName evidence="1">Small ribosomal subunit protein bS6</fullName>
    </recommendedName>
    <alternativeName>
        <fullName evidence="2">30S ribosomal protein S6</fullName>
    </alternativeName>
</protein>
<accession>B7JXP0</accession>
<feature type="chain" id="PRO_1000120735" description="Small ribosomal subunit protein bS6">
    <location>
        <begin position="1"/>
        <end position="124"/>
    </location>
</feature>
<sequence>MNESYEMIYILRPSLSEEQVNQEVNKYRDFLNEYNVKDLQVKIWGKRRLAYPIKRFIDGIYVQMNYQGEGNQVAPLERAMRLSEEVIRYMTLKVETAVSETPASVPEVLVPEPVEEPTPVAAEA</sequence>
<reference key="1">
    <citation type="journal article" date="2011" name="MBio">
        <title>Novel metabolic attributes of the genus Cyanothece, comprising a group of unicellular nitrogen-fixing Cyanobacteria.</title>
        <authorList>
            <person name="Bandyopadhyay A."/>
            <person name="Elvitigala T."/>
            <person name="Welsh E."/>
            <person name="Stockel J."/>
            <person name="Liberton M."/>
            <person name="Min H."/>
            <person name="Sherman L.A."/>
            <person name="Pakrasi H.B."/>
        </authorList>
    </citation>
    <scope>NUCLEOTIDE SEQUENCE [LARGE SCALE GENOMIC DNA]</scope>
    <source>
        <strain>PCC 8801 / RF-1</strain>
    </source>
</reference>
<name>RS6_RIPO1</name>
<organism>
    <name type="scientific">Rippkaea orientalis (strain PCC 8801 / RF-1)</name>
    <name type="common">Cyanothece sp. (strain PCC 8801)</name>
    <dbReference type="NCBI Taxonomy" id="41431"/>
    <lineage>
        <taxon>Bacteria</taxon>
        <taxon>Bacillati</taxon>
        <taxon>Cyanobacteriota</taxon>
        <taxon>Cyanophyceae</taxon>
        <taxon>Oscillatoriophycideae</taxon>
        <taxon>Chroococcales</taxon>
        <taxon>Aphanothecaceae</taxon>
        <taxon>Rippkaea</taxon>
        <taxon>Rippkaea orientalis</taxon>
    </lineage>
</organism>